<keyword id="KW-0221">Differentiation</keyword>
<keyword id="KW-0472">Membrane</keyword>
<keyword id="KW-0597">Phosphoprotein</keyword>
<keyword id="KW-1185">Reference proteome</keyword>
<keyword id="KW-0677">Repeat</keyword>
<feature type="chain" id="PRO_0000311938" description="Synaptotagmin-17">
    <location>
        <begin position="1"/>
        <end position="474"/>
    </location>
</feature>
<feature type="domain" description="C2 1" evidence="4">
    <location>
        <begin position="184"/>
        <end position="310"/>
    </location>
</feature>
<feature type="domain" description="C2 2" evidence="4">
    <location>
        <begin position="321"/>
        <end position="455"/>
    </location>
</feature>
<feature type="region of interest" description="Disordered" evidence="5">
    <location>
        <begin position="60"/>
        <end position="112"/>
    </location>
</feature>
<feature type="compositionally biased region" description="Low complexity" evidence="5">
    <location>
        <begin position="96"/>
        <end position="112"/>
    </location>
</feature>
<feature type="modified residue" description="Phosphoserine" evidence="2">
    <location>
        <position position="118"/>
    </location>
</feature>
<feature type="modified residue" description="Phosphoserine" evidence="2">
    <location>
        <position position="119"/>
    </location>
</feature>
<accession>Q5R8Q5</accession>
<evidence type="ECO:0000250" key="1"/>
<evidence type="ECO:0000250" key="2">
    <source>
        <dbReference type="UniProtKB" id="Q920M7"/>
    </source>
</evidence>
<evidence type="ECO:0000250" key="3">
    <source>
        <dbReference type="UniProtKB" id="Q9BSW7"/>
    </source>
</evidence>
<evidence type="ECO:0000255" key="4">
    <source>
        <dbReference type="PROSITE-ProRule" id="PRU00041"/>
    </source>
</evidence>
<evidence type="ECO:0000256" key="5">
    <source>
        <dbReference type="SAM" id="MobiDB-lite"/>
    </source>
</evidence>
<evidence type="ECO:0000305" key="6"/>
<gene>
    <name type="primary">SYT17</name>
</gene>
<comment type="function">
    <text evidence="3">Plays a role in dendrite formation by melanocytes.</text>
</comment>
<comment type="subcellular location">
    <subcellularLocation>
        <location evidence="1">Membrane</location>
        <topology evidence="1">Peripheral membrane protein</topology>
    </subcellularLocation>
</comment>
<comment type="similarity">
    <text evidence="6">Belongs to the synaptotagmin family.</text>
</comment>
<proteinExistence type="evidence at transcript level"/>
<organism>
    <name type="scientific">Pongo abelii</name>
    <name type="common">Sumatran orangutan</name>
    <name type="synonym">Pongo pygmaeus abelii</name>
    <dbReference type="NCBI Taxonomy" id="9601"/>
    <lineage>
        <taxon>Eukaryota</taxon>
        <taxon>Metazoa</taxon>
        <taxon>Chordata</taxon>
        <taxon>Craniata</taxon>
        <taxon>Vertebrata</taxon>
        <taxon>Euteleostomi</taxon>
        <taxon>Mammalia</taxon>
        <taxon>Eutheria</taxon>
        <taxon>Euarchontoglires</taxon>
        <taxon>Primates</taxon>
        <taxon>Haplorrhini</taxon>
        <taxon>Catarrhini</taxon>
        <taxon>Hominidae</taxon>
        <taxon>Pongo</taxon>
    </lineage>
</organism>
<name>SYT17_PONAB</name>
<protein>
    <recommendedName>
        <fullName>Synaptotagmin-17</fullName>
    </recommendedName>
    <alternativeName>
        <fullName>Synaptotagmin XVII</fullName>
        <shortName>SytXVII</shortName>
    </alternativeName>
</protein>
<dbReference type="EMBL" id="CR859696">
    <property type="protein sequence ID" value="CAH91855.1"/>
    <property type="molecule type" value="mRNA"/>
</dbReference>
<dbReference type="RefSeq" id="NP_001126074.1">
    <property type="nucleotide sequence ID" value="NM_001132602.1"/>
</dbReference>
<dbReference type="SMR" id="Q5R8Q5"/>
<dbReference type="FunCoup" id="Q5R8Q5">
    <property type="interactions" value="45"/>
</dbReference>
<dbReference type="STRING" id="9601.ENSPPYP00000008076"/>
<dbReference type="GeneID" id="100173026"/>
<dbReference type="KEGG" id="pon:100173026"/>
<dbReference type="CTD" id="51760"/>
<dbReference type="eggNOG" id="KOG1028">
    <property type="taxonomic scope" value="Eukaryota"/>
</dbReference>
<dbReference type="InParanoid" id="Q5R8Q5"/>
<dbReference type="OrthoDB" id="270970at2759"/>
<dbReference type="Proteomes" id="UP000001595">
    <property type="component" value="Unplaced"/>
</dbReference>
<dbReference type="GO" id="GO:0070382">
    <property type="term" value="C:exocytic vesicle"/>
    <property type="evidence" value="ECO:0007669"/>
    <property type="project" value="TreeGrafter"/>
</dbReference>
<dbReference type="GO" id="GO:0005886">
    <property type="term" value="C:plasma membrane"/>
    <property type="evidence" value="ECO:0007669"/>
    <property type="project" value="TreeGrafter"/>
</dbReference>
<dbReference type="GO" id="GO:0005509">
    <property type="term" value="F:calcium ion binding"/>
    <property type="evidence" value="ECO:0007669"/>
    <property type="project" value="TreeGrafter"/>
</dbReference>
<dbReference type="GO" id="GO:0005544">
    <property type="term" value="F:calcium-dependent phospholipid binding"/>
    <property type="evidence" value="ECO:0007669"/>
    <property type="project" value="TreeGrafter"/>
</dbReference>
<dbReference type="GO" id="GO:0030276">
    <property type="term" value="F:clathrin binding"/>
    <property type="evidence" value="ECO:0007669"/>
    <property type="project" value="TreeGrafter"/>
</dbReference>
<dbReference type="GO" id="GO:0001786">
    <property type="term" value="F:phosphatidylserine binding"/>
    <property type="evidence" value="ECO:0007669"/>
    <property type="project" value="TreeGrafter"/>
</dbReference>
<dbReference type="GO" id="GO:0000149">
    <property type="term" value="F:SNARE binding"/>
    <property type="evidence" value="ECO:0007669"/>
    <property type="project" value="TreeGrafter"/>
</dbReference>
<dbReference type="GO" id="GO:0017156">
    <property type="term" value="P:calcium-ion regulated exocytosis"/>
    <property type="evidence" value="ECO:0007669"/>
    <property type="project" value="TreeGrafter"/>
</dbReference>
<dbReference type="GO" id="GO:0030154">
    <property type="term" value="P:cell differentiation"/>
    <property type="evidence" value="ECO:0007669"/>
    <property type="project" value="UniProtKB-KW"/>
</dbReference>
<dbReference type="CDD" id="cd08390">
    <property type="entry name" value="C2A_Synaptotagmin-15-17"/>
    <property type="match status" value="1"/>
</dbReference>
<dbReference type="CDD" id="cd08410">
    <property type="entry name" value="C2B_Synaptotagmin-17"/>
    <property type="match status" value="1"/>
</dbReference>
<dbReference type="FunFam" id="2.60.40.150:FF:000053">
    <property type="entry name" value="synaptotagmin-17 isoform X1"/>
    <property type="match status" value="1"/>
</dbReference>
<dbReference type="FunFam" id="2.60.40.150:FF:000064">
    <property type="entry name" value="synaptotagmin-17 isoform X1"/>
    <property type="match status" value="1"/>
</dbReference>
<dbReference type="Gene3D" id="2.60.40.150">
    <property type="entry name" value="C2 domain"/>
    <property type="match status" value="2"/>
</dbReference>
<dbReference type="InterPro" id="IPR000008">
    <property type="entry name" value="C2_dom"/>
</dbReference>
<dbReference type="InterPro" id="IPR035892">
    <property type="entry name" value="C2_domain_sf"/>
</dbReference>
<dbReference type="InterPro" id="IPR001565">
    <property type="entry name" value="Synaptotagmin"/>
</dbReference>
<dbReference type="InterPro" id="IPR047897">
    <property type="entry name" value="Synaptotagmin-15/17_C2A"/>
</dbReference>
<dbReference type="InterPro" id="IPR014705">
    <property type="entry name" value="Syt17_C2B"/>
</dbReference>
<dbReference type="PANTHER" id="PTHR10024">
    <property type="entry name" value="SYNAPTOTAGMIN"/>
    <property type="match status" value="1"/>
</dbReference>
<dbReference type="PANTHER" id="PTHR10024:SF348">
    <property type="entry name" value="SYNAPTOTAGMIN-17"/>
    <property type="match status" value="1"/>
</dbReference>
<dbReference type="Pfam" id="PF00168">
    <property type="entry name" value="C2"/>
    <property type="match status" value="2"/>
</dbReference>
<dbReference type="PRINTS" id="PR00399">
    <property type="entry name" value="SYNAPTOTAGMN"/>
</dbReference>
<dbReference type="SMART" id="SM00239">
    <property type="entry name" value="C2"/>
    <property type="match status" value="2"/>
</dbReference>
<dbReference type="SUPFAM" id="SSF49562">
    <property type="entry name" value="C2 domain (Calcium/lipid-binding domain, CaLB)"/>
    <property type="match status" value="2"/>
</dbReference>
<dbReference type="PROSITE" id="PS50004">
    <property type="entry name" value="C2"/>
    <property type="match status" value="2"/>
</dbReference>
<reference key="1">
    <citation type="submission" date="2004-11" db="EMBL/GenBank/DDBJ databases">
        <authorList>
            <consortium name="The German cDNA consortium"/>
        </authorList>
    </citation>
    <scope>NUCLEOTIDE SEQUENCE [LARGE SCALE MRNA]</scope>
    <source>
        <tissue>Kidney</tissue>
    </source>
</reference>
<sequence>MAYIQLEPLNEGFLSRISDLLLCRWTCRHCCQKCYESSCCQSSEDEVEILGPFPAQTPPWLMASRSSDKDGDSVHTASEVPLTPRTNSPDGRRSSSDTSKSTYSLTRRISSLESRRPSSPLIDIKPIEFGVLSAKKEPIQPSVLRRTYTPDDYFRKFEPHLYSLDPNSDDVDSLTDEEILSKYQLGMLHFSTQYDLLHNHLTVRVIEARDLPPPISHDGSRQDMAHSNPYVKICLLPDQKNSKQTGVKRKTQKPVFEERYTFEIPFLEAQRRTLLLTVVDFDKFSRHCVIGKVSVPLCEVDLVKGGHWWKALIPSSQNEVELGELLLSLNYLPSAGRLNVDVIRAKQLLQTDVSQGSDPFVKIQLVHGLKLVKTKKTSFLRGTIDPFYNESFSFKVPQEELENASLVFTVFGHNMKSSNDFIGRIVIGQYSSGPSESNHWRRMLNTHRTAVEQWHSLRSRAECDRVSPASLEVT</sequence>